<sequence length="433" mass="49752">MSAAARTFISIHIGVCFDEMDSPGSSAPSPPDLTIIPKISSKKCQICENPAHGKHFGAVTCRACAAFFRRFGISNNFKPCKTENKCSFRKNGYFSCKKCRMQRCLQFGMTIDNFQFDREPFNPLKMNVGIPQTVDTFSGRPSLILFSAPSGSSGPKRYIDVQFLVDRAVEVLLNGSETPYQVSNVLQKLAIGLQNIRGPQQKVSQIVTKIGKEGIFKLWEEEMLRMAKWLTYFDDFQRLPHSVQIEILNGVWFLFGRLENIASTALARKRKLCKDDMVMTCVNKNVLICDLRTLEIDLSWCSKYTFQQLKFFDQYDDLRQLDILINAMLDLEPTHEELSYMICQLCFHQVGKKLQGNILKTVEKLQEVLSNNLHDYYVNQMNQPKYSKRIARMMKINNTVEQCLYRDRVKADLMKVFEVFHVECSHPGIFLNA</sequence>
<proteinExistence type="inferred from homology"/>
<organism>
    <name type="scientific">Caenorhabditis elegans</name>
    <dbReference type="NCBI Taxonomy" id="6239"/>
    <lineage>
        <taxon>Eukaryota</taxon>
        <taxon>Metazoa</taxon>
        <taxon>Ecdysozoa</taxon>
        <taxon>Nematoda</taxon>
        <taxon>Chromadorea</taxon>
        <taxon>Rhabditida</taxon>
        <taxon>Rhabditina</taxon>
        <taxon>Rhabditomorpha</taxon>
        <taxon>Rhabditoidea</taxon>
        <taxon>Rhabditidae</taxon>
        <taxon>Peloderinae</taxon>
        <taxon>Caenorhabditis</taxon>
    </lineage>
</organism>
<feature type="chain" id="PRO_0000053802" description="Nuclear hormone receptor family member nhr-98">
    <location>
        <begin position="1"/>
        <end position="433"/>
    </location>
</feature>
<feature type="domain" description="NR LBD" evidence="2">
    <location>
        <begin position="177"/>
        <end position="433"/>
    </location>
</feature>
<feature type="DNA-binding region" description="Nuclear receptor" evidence="1">
    <location>
        <begin position="41"/>
        <end position="116"/>
    </location>
</feature>
<feature type="zinc finger region" description="NR C4-type" evidence="1">
    <location>
        <begin position="44"/>
        <end position="64"/>
    </location>
</feature>
<feature type="zinc finger region" description="NR C4-type" evidence="1">
    <location>
        <begin position="80"/>
        <end position="104"/>
    </location>
</feature>
<protein>
    <recommendedName>
        <fullName>Nuclear hormone receptor family member nhr-98</fullName>
    </recommendedName>
</protein>
<gene>
    <name type="primary">nhr-98</name>
    <name type="ORF">M02H5.6</name>
</gene>
<dbReference type="EMBL" id="FO080236">
    <property type="protein sequence ID" value="CCD62239.1"/>
    <property type="molecule type" value="Genomic_DNA"/>
</dbReference>
<dbReference type="FunCoup" id="Q966I0">
    <property type="interactions" value="51"/>
</dbReference>
<dbReference type="PaxDb" id="6239-M02H5.6"/>
<dbReference type="UCSC" id="M02H5.6">
    <property type="organism name" value="c. elegans"/>
</dbReference>
<dbReference type="WormBase" id="M02H5.6">
    <property type="protein sequence ID" value="CE35342"/>
    <property type="gene ID" value="WBGene00003688"/>
    <property type="gene designation" value="nhr-98"/>
</dbReference>
<dbReference type="eggNOG" id="KOG3575">
    <property type="taxonomic scope" value="Eukaryota"/>
</dbReference>
<dbReference type="HOGENOM" id="CLU_007368_7_1_1"/>
<dbReference type="InParanoid" id="Q966I0"/>
<dbReference type="PhylomeDB" id="Q966I0"/>
<dbReference type="PRO" id="PR:Q966I0"/>
<dbReference type="Proteomes" id="UP000001940">
    <property type="component" value="Chromosome V"/>
</dbReference>
<dbReference type="GO" id="GO:0005634">
    <property type="term" value="C:nucleus"/>
    <property type="evidence" value="ECO:0007669"/>
    <property type="project" value="UniProtKB-SubCell"/>
</dbReference>
<dbReference type="GO" id="GO:0003700">
    <property type="term" value="F:DNA-binding transcription factor activity"/>
    <property type="evidence" value="ECO:0007669"/>
    <property type="project" value="InterPro"/>
</dbReference>
<dbReference type="GO" id="GO:0000978">
    <property type="term" value="F:RNA polymerase II cis-regulatory region sequence-specific DNA binding"/>
    <property type="evidence" value="ECO:0007669"/>
    <property type="project" value="InterPro"/>
</dbReference>
<dbReference type="GO" id="GO:0008270">
    <property type="term" value="F:zinc ion binding"/>
    <property type="evidence" value="ECO:0007669"/>
    <property type="project" value="UniProtKB-KW"/>
</dbReference>
<dbReference type="CDD" id="cd06960">
    <property type="entry name" value="NR_DBD_HNF4A"/>
    <property type="match status" value="1"/>
</dbReference>
<dbReference type="Gene3D" id="3.30.50.10">
    <property type="entry name" value="Erythroid Transcription Factor GATA-1, subunit A"/>
    <property type="match status" value="1"/>
</dbReference>
<dbReference type="Gene3D" id="1.10.565.10">
    <property type="entry name" value="Retinoid X Receptor"/>
    <property type="match status" value="1"/>
</dbReference>
<dbReference type="InterPro" id="IPR051152">
    <property type="entry name" value="C.elegans_Orphan_NR"/>
</dbReference>
<dbReference type="InterPro" id="IPR049636">
    <property type="entry name" value="HNF4-like_DBD"/>
</dbReference>
<dbReference type="InterPro" id="IPR035500">
    <property type="entry name" value="NHR-like_dom_sf"/>
</dbReference>
<dbReference type="InterPro" id="IPR000536">
    <property type="entry name" value="Nucl_hrmn_rcpt_lig-bd"/>
</dbReference>
<dbReference type="InterPro" id="IPR001628">
    <property type="entry name" value="Znf_hrmn_rcpt"/>
</dbReference>
<dbReference type="InterPro" id="IPR013088">
    <property type="entry name" value="Znf_NHR/GATA"/>
</dbReference>
<dbReference type="PANTHER" id="PTHR45680">
    <property type="entry name" value="NUCLEAR HORMONE RECEPTOR FAMILY"/>
    <property type="match status" value="1"/>
</dbReference>
<dbReference type="PANTHER" id="PTHR45680:SF5">
    <property type="entry name" value="NUCLEAR HORMONE RECEPTOR FAMILY-RELATED"/>
    <property type="match status" value="1"/>
</dbReference>
<dbReference type="Pfam" id="PF00104">
    <property type="entry name" value="Hormone_recep"/>
    <property type="match status" value="1"/>
</dbReference>
<dbReference type="Pfam" id="PF00105">
    <property type="entry name" value="zf-C4"/>
    <property type="match status" value="1"/>
</dbReference>
<dbReference type="PRINTS" id="PR00047">
    <property type="entry name" value="STROIDFINGER"/>
</dbReference>
<dbReference type="SMART" id="SM00430">
    <property type="entry name" value="HOLI"/>
    <property type="match status" value="1"/>
</dbReference>
<dbReference type="SMART" id="SM00399">
    <property type="entry name" value="ZnF_C4"/>
    <property type="match status" value="1"/>
</dbReference>
<dbReference type="SUPFAM" id="SSF57716">
    <property type="entry name" value="Glucocorticoid receptor-like (DNA-binding domain)"/>
    <property type="match status" value="1"/>
</dbReference>
<dbReference type="SUPFAM" id="SSF48508">
    <property type="entry name" value="Nuclear receptor ligand-binding domain"/>
    <property type="match status" value="1"/>
</dbReference>
<dbReference type="PROSITE" id="PS51843">
    <property type="entry name" value="NR_LBD"/>
    <property type="match status" value="1"/>
</dbReference>
<dbReference type="PROSITE" id="PS00031">
    <property type="entry name" value="NUCLEAR_REC_DBD_1"/>
    <property type="match status" value="1"/>
</dbReference>
<dbReference type="PROSITE" id="PS51030">
    <property type="entry name" value="NUCLEAR_REC_DBD_2"/>
    <property type="match status" value="1"/>
</dbReference>
<keyword id="KW-0238">DNA-binding</keyword>
<keyword id="KW-0479">Metal-binding</keyword>
<keyword id="KW-0539">Nucleus</keyword>
<keyword id="KW-0675">Receptor</keyword>
<keyword id="KW-1185">Reference proteome</keyword>
<keyword id="KW-0804">Transcription</keyword>
<keyword id="KW-0805">Transcription regulation</keyword>
<keyword id="KW-0862">Zinc</keyword>
<keyword id="KW-0863">Zinc-finger</keyword>
<evidence type="ECO:0000255" key="1">
    <source>
        <dbReference type="PROSITE-ProRule" id="PRU00407"/>
    </source>
</evidence>
<evidence type="ECO:0000255" key="2">
    <source>
        <dbReference type="PROSITE-ProRule" id="PRU01189"/>
    </source>
</evidence>
<evidence type="ECO:0000305" key="3"/>
<accession>Q966I0</accession>
<comment type="function">
    <text>Orphan nuclear receptor.</text>
</comment>
<comment type="subcellular location">
    <subcellularLocation>
        <location evidence="1">Nucleus</location>
    </subcellularLocation>
</comment>
<comment type="similarity">
    <text evidence="3">Belongs to the nuclear hormone receptor family.</text>
</comment>
<name>NHR98_CAEEL</name>
<reference key="1">
    <citation type="journal article" date="1998" name="Science">
        <title>Genome sequence of the nematode C. elegans: a platform for investigating biology.</title>
        <authorList>
            <consortium name="The C. elegans sequencing consortium"/>
        </authorList>
    </citation>
    <scope>NUCLEOTIDE SEQUENCE [LARGE SCALE GENOMIC DNA]</scope>
    <source>
        <strain>Bristol N2</strain>
    </source>
</reference>